<reference key="1">
    <citation type="journal article" date="2001" name="J. Vet. Med. Sci.">
        <title>Molecular cloning of horse Hsp90 cDNA and its comparative analysis with other vertebrate Hsp90 sequences.</title>
        <authorList>
            <person name="Pepin K."/>
            <person name="Momose F."/>
            <person name="Ishida N."/>
            <person name="Nagata K."/>
        </authorList>
    </citation>
    <scope>NUCLEOTIDE SEQUENCE [MRNA]</scope>
</reference>
<gene>
    <name type="primary">HSP90AA1</name>
    <name type="synonym">HSPCA</name>
</gene>
<evidence type="ECO:0000250" key="1"/>
<evidence type="ECO:0000250" key="2">
    <source>
        <dbReference type="UniProtKB" id="P07900"/>
    </source>
</evidence>
<evidence type="ECO:0000250" key="3">
    <source>
        <dbReference type="UniProtKB" id="P07901"/>
    </source>
</evidence>
<evidence type="ECO:0000250" key="4">
    <source>
        <dbReference type="UniProtKB" id="P82995"/>
    </source>
</evidence>
<evidence type="ECO:0000256" key="5">
    <source>
        <dbReference type="SAM" id="MobiDB-lite"/>
    </source>
</evidence>
<evidence type="ECO:0000305" key="6"/>
<proteinExistence type="evidence at transcript level"/>
<dbReference type="EC" id="3.6.4.10" evidence="2"/>
<dbReference type="EMBL" id="AB043677">
    <property type="protein sequence ID" value="BAB20777.1"/>
    <property type="molecule type" value="mRNA"/>
</dbReference>
<dbReference type="RefSeq" id="NP_001157427.1">
    <property type="nucleotide sequence ID" value="NM_001163955.1"/>
</dbReference>
<dbReference type="RefSeq" id="XP_023483460.1">
    <property type="nucleotide sequence ID" value="XM_023627692.2"/>
</dbReference>
<dbReference type="RefSeq" id="XP_070105226.1">
    <property type="nucleotide sequence ID" value="XM_070249125.1"/>
</dbReference>
<dbReference type="SMR" id="Q9GKX7"/>
<dbReference type="FunCoup" id="Q9GKX7">
    <property type="interactions" value="2131"/>
</dbReference>
<dbReference type="IntAct" id="Q9GKX7">
    <property type="interactions" value="1"/>
</dbReference>
<dbReference type="MINT" id="Q9GKX7"/>
<dbReference type="STRING" id="9796.ENSECAP00000025926"/>
<dbReference type="PaxDb" id="9796-ENSECAP00000025926"/>
<dbReference type="PeptideAtlas" id="Q9GKX7"/>
<dbReference type="GeneID" id="100033837"/>
<dbReference type="KEGG" id="ecb:100033837"/>
<dbReference type="CTD" id="3320"/>
<dbReference type="HOGENOM" id="CLU_006684_1_3_1"/>
<dbReference type="InParanoid" id="Q9GKX7"/>
<dbReference type="OrthoDB" id="5426351at2759"/>
<dbReference type="TreeFam" id="TF300686"/>
<dbReference type="Proteomes" id="UP000002281">
    <property type="component" value="Chromosome 24"/>
</dbReference>
<dbReference type="Bgee" id="ENSECAG00000018948">
    <property type="expression patterns" value="Expressed in retina and 23 other cell types or tissues"/>
</dbReference>
<dbReference type="GO" id="GO:0005737">
    <property type="term" value="C:cytoplasm"/>
    <property type="evidence" value="ECO:0000250"/>
    <property type="project" value="AgBase"/>
</dbReference>
<dbReference type="GO" id="GO:0005829">
    <property type="term" value="C:cytosol"/>
    <property type="evidence" value="ECO:0000318"/>
    <property type="project" value="GO_Central"/>
</dbReference>
<dbReference type="GO" id="GO:0042470">
    <property type="term" value="C:melanosome"/>
    <property type="evidence" value="ECO:0007669"/>
    <property type="project" value="UniProtKB-SubCell"/>
</dbReference>
<dbReference type="GO" id="GO:0005739">
    <property type="term" value="C:mitochondrion"/>
    <property type="evidence" value="ECO:0000250"/>
    <property type="project" value="UniProtKB"/>
</dbReference>
<dbReference type="GO" id="GO:0043209">
    <property type="term" value="C:myelin sheath"/>
    <property type="evidence" value="ECO:0000318"/>
    <property type="project" value="GO_Central"/>
</dbReference>
<dbReference type="GO" id="GO:0043025">
    <property type="term" value="C:neuronal cell body"/>
    <property type="evidence" value="ECO:0000318"/>
    <property type="project" value="GO_Central"/>
</dbReference>
<dbReference type="GO" id="GO:0005634">
    <property type="term" value="C:nucleus"/>
    <property type="evidence" value="ECO:0000250"/>
    <property type="project" value="AgBase"/>
</dbReference>
<dbReference type="GO" id="GO:0048471">
    <property type="term" value="C:perinuclear region of cytoplasm"/>
    <property type="evidence" value="ECO:0000318"/>
    <property type="project" value="GO_Central"/>
</dbReference>
<dbReference type="GO" id="GO:0005886">
    <property type="term" value="C:plasma membrane"/>
    <property type="evidence" value="ECO:0000318"/>
    <property type="project" value="GO_Central"/>
</dbReference>
<dbReference type="GO" id="GO:0032991">
    <property type="term" value="C:protein-containing complex"/>
    <property type="evidence" value="ECO:0000318"/>
    <property type="project" value="GO_Central"/>
</dbReference>
<dbReference type="GO" id="GO:0005524">
    <property type="term" value="F:ATP binding"/>
    <property type="evidence" value="ECO:0000250"/>
    <property type="project" value="UniProtKB"/>
</dbReference>
<dbReference type="GO" id="GO:0016887">
    <property type="term" value="F:ATP hydrolysis activity"/>
    <property type="evidence" value="ECO:0000318"/>
    <property type="project" value="GO_Central"/>
</dbReference>
<dbReference type="GO" id="GO:0140662">
    <property type="term" value="F:ATP-dependent protein folding chaperone"/>
    <property type="evidence" value="ECO:0007669"/>
    <property type="project" value="InterPro"/>
</dbReference>
<dbReference type="GO" id="GO:0030235">
    <property type="term" value="F:nitric-oxide synthase regulator activity"/>
    <property type="evidence" value="ECO:0000250"/>
    <property type="project" value="UniProtKB"/>
</dbReference>
<dbReference type="GO" id="GO:0030911">
    <property type="term" value="F:TPR domain binding"/>
    <property type="evidence" value="ECO:0000250"/>
    <property type="project" value="UniProtKB"/>
</dbReference>
<dbReference type="GO" id="GO:0051082">
    <property type="term" value="F:unfolded protein binding"/>
    <property type="evidence" value="ECO:0000318"/>
    <property type="project" value="GO_Central"/>
</dbReference>
<dbReference type="GO" id="GO:0002218">
    <property type="term" value="P:activation of innate immune response"/>
    <property type="evidence" value="ECO:0000250"/>
    <property type="project" value="UniProtKB"/>
</dbReference>
<dbReference type="GO" id="GO:0034605">
    <property type="term" value="P:cellular response to heat"/>
    <property type="evidence" value="ECO:0000318"/>
    <property type="project" value="GO_Central"/>
</dbReference>
<dbReference type="GO" id="GO:0098586">
    <property type="term" value="P:cellular response to virus"/>
    <property type="evidence" value="ECO:0000250"/>
    <property type="project" value="UniProtKB"/>
</dbReference>
<dbReference type="GO" id="GO:0002230">
    <property type="term" value="P:positive regulation of defense response to virus by host"/>
    <property type="evidence" value="ECO:0000250"/>
    <property type="project" value="UniProtKB"/>
</dbReference>
<dbReference type="GO" id="GO:0032728">
    <property type="term" value="P:positive regulation of interferon-beta production"/>
    <property type="evidence" value="ECO:0000250"/>
    <property type="project" value="UniProtKB"/>
</dbReference>
<dbReference type="GO" id="GO:0045429">
    <property type="term" value="P:positive regulation of nitric oxide biosynthetic process"/>
    <property type="evidence" value="ECO:0000250"/>
    <property type="project" value="UniProtKB"/>
</dbReference>
<dbReference type="GO" id="GO:0006457">
    <property type="term" value="P:protein folding"/>
    <property type="evidence" value="ECO:0000318"/>
    <property type="project" value="GO_Central"/>
</dbReference>
<dbReference type="GO" id="GO:0050821">
    <property type="term" value="P:protein stabilization"/>
    <property type="evidence" value="ECO:0000318"/>
    <property type="project" value="GO_Central"/>
</dbReference>
<dbReference type="GO" id="GO:0042981">
    <property type="term" value="P:regulation of apoptotic process"/>
    <property type="evidence" value="ECO:0000250"/>
    <property type="project" value="UniProtKB"/>
</dbReference>
<dbReference type="GO" id="GO:0046677">
    <property type="term" value="P:response to antibiotic"/>
    <property type="evidence" value="ECO:0000250"/>
    <property type="project" value="AgBase"/>
</dbReference>
<dbReference type="GO" id="GO:0009409">
    <property type="term" value="P:response to cold"/>
    <property type="evidence" value="ECO:0000250"/>
    <property type="project" value="AgBase"/>
</dbReference>
<dbReference type="GO" id="GO:0009408">
    <property type="term" value="P:response to heat"/>
    <property type="evidence" value="ECO:0000250"/>
    <property type="project" value="AgBase"/>
</dbReference>
<dbReference type="CDD" id="cd16927">
    <property type="entry name" value="HATPase_Hsp90-like"/>
    <property type="match status" value="1"/>
</dbReference>
<dbReference type="FunFam" id="1.20.120.790:FF:000001">
    <property type="entry name" value="Heat shock protein 90 alpha"/>
    <property type="match status" value="1"/>
</dbReference>
<dbReference type="FunFam" id="3.30.230.80:FF:000001">
    <property type="entry name" value="Heat shock protein 90 alpha"/>
    <property type="match status" value="1"/>
</dbReference>
<dbReference type="FunFam" id="3.40.50.11260:FF:000001">
    <property type="entry name" value="Heat shock protein 90 alpha"/>
    <property type="match status" value="1"/>
</dbReference>
<dbReference type="FunFam" id="3.30.565.10:FF:000204">
    <property type="entry name" value="Heat shock protein HSP 90-beta"/>
    <property type="match status" value="1"/>
</dbReference>
<dbReference type="Gene3D" id="3.30.230.80">
    <property type="match status" value="1"/>
</dbReference>
<dbReference type="Gene3D" id="3.40.50.11260">
    <property type="match status" value="1"/>
</dbReference>
<dbReference type="Gene3D" id="1.20.120.790">
    <property type="entry name" value="Heat shock protein 90, C-terminal domain"/>
    <property type="match status" value="1"/>
</dbReference>
<dbReference type="Gene3D" id="3.30.565.10">
    <property type="entry name" value="Histidine kinase-like ATPase, C-terminal domain"/>
    <property type="match status" value="1"/>
</dbReference>
<dbReference type="HAMAP" id="MF_00505">
    <property type="entry name" value="HSP90"/>
    <property type="match status" value="1"/>
</dbReference>
<dbReference type="InterPro" id="IPR036890">
    <property type="entry name" value="HATPase_C_sf"/>
</dbReference>
<dbReference type="InterPro" id="IPR019805">
    <property type="entry name" value="Heat_shock_protein_90_CS"/>
</dbReference>
<dbReference type="InterPro" id="IPR037196">
    <property type="entry name" value="HSP90_C"/>
</dbReference>
<dbReference type="InterPro" id="IPR001404">
    <property type="entry name" value="Hsp90_fam"/>
</dbReference>
<dbReference type="InterPro" id="IPR020575">
    <property type="entry name" value="Hsp90_N"/>
</dbReference>
<dbReference type="InterPro" id="IPR020568">
    <property type="entry name" value="Ribosomal_Su5_D2-typ_SF"/>
</dbReference>
<dbReference type="NCBIfam" id="NF003555">
    <property type="entry name" value="PRK05218.1"/>
    <property type="match status" value="1"/>
</dbReference>
<dbReference type="PANTHER" id="PTHR11528">
    <property type="entry name" value="HEAT SHOCK PROTEIN 90 FAMILY MEMBER"/>
    <property type="match status" value="1"/>
</dbReference>
<dbReference type="Pfam" id="PF13589">
    <property type="entry name" value="HATPase_c_3"/>
    <property type="match status" value="1"/>
</dbReference>
<dbReference type="Pfam" id="PF00183">
    <property type="entry name" value="HSP90"/>
    <property type="match status" value="1"/>
</dbReference>
<dbReference type="PIRSF" id="PIRSF002583">
    <property type="entry name" value="Hsp90"/>
    <property type="match status" value="1"/>
</dbReference>
<dbReference type="PRINTS" id="PR00775">
    <property type="entry name" value="HEATSHOCK90"/>
</dbReference>
<dbReference type="SMART" id="SM00387">
    <property type="entry name" value="HATPase_c"/>
    <property type="match status" value="1"/>
</dbReference>
<dbReference type="SUPFAM" id="SSF55874">
    <property type="entry name" value="ATPase domain of HSP90 chaperone/DNA topoisomerase II/histidine kinase"/>
    <property type="match status" value="1"/>
</dbReference>
<dbReference type="SUPFAM" id="SSF110942">
    <property type="entry name" value="HSP90 C-terminal domain"/>
    <property type="match status" value="1"/>
</dbReference>
<dbReference type="SUPFAM" id="SSF54211">
    <property type="entry name" value="Ribosomal protein S5 domain 2-like"/>
    <property type="match status" value="1"/>
</dbReference>
<dbReference type="PROSITE" id="PS00298">
    <property type="entry name" value="HSP90"/>
    <property type="match status" value="1"/>
</dbReference>
<keyword id="KW-0007">Acetylation</keyword>
<keyword id="KW-0067">ATP-binding</keyword>
<keyword id="KW-1003">Cell membrane</keyword>
<keyword id="KW-0143">Chaperone</keyword>
<keyword id="KW-0963">Cytoplasm</keyword>
<keyword id="KW-0378">Hydrolase</keyword>
<keyword id="KW-0472">Membrane</keyword>
<keyword id="KW-0496">Mitochondrion</keyword>
<keyword id="KW-0547">Nucleotide-binding</keyword>
<keyword id="KW-0539">Nucleus</keyword>
<keyword id="KW-0597">Phosphoprotein</keyword>
<keyword id="KW-1185">Reference proteome</keyword>
<keyword id="KW-0702">S-nitrosylation</keyword>
<keyword id="KW-0346">Stress response</keyword>
<keyword id="KW-0832">Ubl conjugation</keyword>
<accession>Q9GKX7</accession>
<name>HS90A_HORSE</name>
<feature type="chain" id="PRO_0000409817" description="Heat shock protein HSP 90-alpha">
    <location>
        <begin position="1"/>
        <end position="733"/>
    </location>
</feature>
<feature type="region of interest" description="Interaction with NR3C1" evidence="3">
    <location>
        <begin position="9"/>
        <end position="236"/>
    </location>
</feature>
<feature type="region of interest" description="Disordered" evidence="5">
    <location>
        <begin position="225"/>
        <end position="279"/>
    </location>
</feature>
<feature type="region of interest" description="Interaction with NR3C1" evidence="3">
    <location>
        <begin position="272"/>
        <end position="617"/>
    </location>
</feature>
<feature type="region of interest" description="Interaction with FLCN and FNIP1" evidence="2">
    <location>
        <begin position="285"/>
        <end position="733"/>
    </location>
</feature>
<feature type="region of interest" description="Interaction with FNIP2 and TSC1" evidence="2">
    <location>
        <begin position="285"/>
        <end position="621"/>
    </location>
</feature>
<feature type="region of interest" description="Interaction with NR1D1" evidence="3">
    <location>
        <begin position="629"/>
        <end position="732"/>
    </location>
</feature>
<feature type="region of interest" description="Required for homodimerization" evidence="2">
    <location>
        <begin position="683"/>
        <end position="733"/>
    </location>
</feature>
<feature type="region of interest" description="Disordered" evidence="5">
    <location>
        <begin position="700"/>
        <end position="733"/>
    </location>
</feature>
<feature type="region of interest" description="Essential for interaction with SMYD3, TSC1 and STIP1/HOP" evidence="2">
    <location>
        <begin position="729"/>
        <end position="733"/>
    </location>
</feature>
<feature type="region of interest" description="Essential for interaction with SGTA and TTC1" evidence="2">
    <location>
        <begin position="730"/>
        <end position="733"/>
    </location>
</feature>
<feature type="short sequence motif" description="TPR repeat-binding" evidence="2">
    <location>
        <begin position="724"/>
        <end position="733"/>
    </location>
</feature>
<feature type="compositionally biased region" description="Acidic residues" evidence="5">
    <location>
        <begin position="230"/>
        <end position="246"/>
    </location>
</feature>
<feature type="compositionally biased region" description="Acidic residues" evidence="5">
    <location>
        <begin position="256"/>
        <end position="269"/>
    </location>
</feature>
<feature type="binding site" evidence="1">
    <location>
        <position position="51"/>
    </location>
    <ligand>
        <name>ATP</name>
        <dbReference type="ChEBI" id="CHEBI:30616"/>
    </ligand>
</feature>
<feature type="binding site" evidence="1">
    <location>
        <position position="93"/>
    </location>
    <ligand>
        <name>ATP</name>
        <dbReference type="ChEBI" id="CHEBI:30616"/>
    </ligand>
</feature>
<feature type="binding site" evidence="1">
    <location>
        <position position="112"/>
    </location>
    <ligand>
        <name>ATP</name>
        <dbReference type="ChEBI" id="CHEBI:30616"/>
    </ligand>
</feature>
<feature type="binding site" evidence="1">
    <location>
        <position position="138"/>
    </location>
    <ligand>
        <name>ATP</name>
        <dbReference type="ChEBI" id="CHEBI:30616"/>
    </ligand>
</feature>
<feature type="binding site" evidence="1">
    <location>
        <position position="401"/>
    </location>
    <ligand>
        <name>ATP</name>
        <dbReference type="ChEBI" id="CHEBI:30616"/>
    </ligand>
</feature>
<feature type="modified residue" description="Phosphothreonine; by PRKDC" evidence="2">
    <location>
        <position position="5"/>
    </location>
</feature>
<feature type="modified residue" description="Phosphothreonine; by PRKDC" evidence="2">
    <location>
        <position position="7"/>
    </location>
</feature>
<feature type="modified residue" description="N6-acetyllysine" evidence="3">
    <location>
        <position position="58"/>
    </location>
</feature>
<feature type="modified residue" description="N6-acetyllysine" evidence="3">
    <location>
        <position position="84"/>
    </location>
</feature>
<feature type="modified residue" description="Phosphoserine" evidence="2">
    <location>
        <position position="231"/>
    </location>
</feature>
<feature type="modified residue" description="Phosphoserine" evidence="2">
    <location>
        <position position="252"/>
    </location>
</feature>
<feature type="modified residue" description="Phosphoserine" evidence="2">
    <location>
        <position position="263"/>
    </location>
</feature>
<feature type="modified residue" description="Phosphotyrosine" evidence="3">
    <location>
        <position position="314"/>
    </location>
</feature>
<feature type="modified residue" description="N6-acetyllysine" evidence="2">
    <location>
        <position position="444"/>
    </location>
</feature>
<feature type="modified residue" description="Phosphoserine" evidence="4">
    <location>
        <position position="454"/>
    </location>
</feature>
<feature type="modified residue" description="N6-acetyllysine" evidence="2">
    <location>
        <position position="459"/>
    </location>
</feature>
<feature type="modified residue" description="Phosphoserine" evidence="2">
    <location>
        <position position="477"/>
    </location>
</feature>
<feature type="modified residue" description="N6-acetyllysine" evidence="2">
    <location>
        <position position="490"/>
    </location>
</feature>
<feature type="modified residue" description="Phosphotyrosine" evidence="3">
    <location>
        <position position="493"/>
    </location>
</feature>
<feature type="modified residue" description="N6-acetyllysine" evidence="2">
    <location>
        <position position="586"/>
    </location>
</feature>
<feature type="modified residue" description="S-nitrosocysteine" evidence="2">
    <location>
        <position position="599"/>
    </location>
</feature>
<feature type="modified residue" description="Phosphoserine" evidence="2">
    <location>
        <position position="642"/>
    </location>
</feature>
<organism>
    <name type="scientific">Equus caballus</name>
    <name type="common">Horse</name>
    <dbReference type="NCBI Taxonomy" id="9796"/>
    <lineage>
        <taxon>Eukaryota</taxon>
        <taxon>Metazoa</taxon>
        <taxon>Chordata</taxon>
        <taxon>Craniata</taxon>
        <taxon>Vertebrata</taxon>
        <taxon>Euteleostomi</taxon>
        <taxon>Mammalia</taxon>
        <taxon>Eutheria</taxon>
        <taxon>Laurasiatheria</taxon>
        <taxon>Perissodactyla</taxon>
        <taxon>Equidae</taxon>
        <taxon>Equus</taxon>
    </lineage>
</organism>
<protein>
    <recommendedName>
        <fullName>Heat shock protein HSP 90-alpha</fullName>
        <ecNumber evidence="2">3.6.4.10</ecNumber>
    </recommendedName>
</protein>
<sequence>MPEETHTQDQPMEEEEVETFAFQAEIAQLMSLIINTFYSNKEIFLRELISNSSDALDKIRYESLTDPSKLDSGKELHINLIPNKQDRTLTIVDTGIGMTKADLINNLGTIAKSGTKAFMEALQAGADISMIGQFGVGFYSAYLVAEKVTVITKHNDDEQYAWESSAGGSFTVRTDTGEPMGRGTKVILHLKEDQTEYLEERRIKEIVKKHSQFIGYPITLFVEKERDKEVSDDEAEEKEDKEEEKEKEEKESDDKPEIEDVGSDEEEEEKKDGDKKKKKKIKEKYIDQEELNKTKPIWTRNPDDITNEEYGEFYKSLTNDWEDHLAVKHFSVEGQLEFRALLFVPRRAPFDLFENRKKKNNIKLYVRRVFIMDNCEELIPEYLNFIRGVVDSEDLPLNISREMLQQSKILKVIRKNLVKKCLELFTELAEDKENYKKFYEQFSKNIKLGIHEDSQNRKKLSELLRYYTSASGDEMVSLKDYCTRMKENQKHIYYITGETKDQVANSAFVERLRKHGLEVIYMIEPIDEYCVQQLKEFEGKTLVSVTKEGLELPEDEEEKKKQEEKKTKFENLCKIMKDILEKKVEKVVVSNRLVTSPCCIVTSTYGWTANMERIMKAQALRDNSTMGYMAAKKHLEINPDHSIIETLRQKAEADKNDKSVKDLVILLYETALLSSGFSLEDPQTHANRIYRMIKLGLGIDEDDPTADDSSAAVTEEMPPLEGDDDTSRMEEVD</sequence>
<comment type="function">
    <text evidence="2">Molecular chaperone that promotes the maturation, structural maintenance and proper regulation of specific target proteins involved for instance in cell cycle control and signal transduction. Undergoes a functional cycle that is linked to its ATPase activity which is essential for its chaperone activity. This cycle probably induces conformational changes in the client proteins, thereby causing their activation. Interacts dynamically with various co-chaperones that modulate its substrate recognition, ATPase cycle and chaperone function. Engages with a range of client protein classes via its interaction with various co-chaperone proteins or complexes, that act as adapters, simultaneously able to interact with the specific client and the central chaperone itself. Recruitment of ATP and co-chaperone followed by client protein forms a functional chaperone. After the completion of the chaperoning process, properly folded client protein and co-chaperone leave HSP90 in an ADP-bound partially open conformation and finally, ADP is released from HSP90 which acquires an open conformation for the next cycle. Plays a critical role in mitochondrial import, delivers preproteins to the mitochondrial import receptor TOMM70. Apart from its chaperone activity, it also plays a role in the regulation of the transcription machinery. HSP90 and its co-chaperones modulate transcription at least at three different levels. In the first place, they alter the steady-state levels of certain transcription factors in response to various physiological cues. Second, they modulate the activity of certain epigenetic modifiers, such as histone deacetylases or DNA methyl transferases, and thereby respond to the change in the environment. Third, they participate in the eviction of histones from the promoter region of certain genes and thereby turn on gene expression. Binds bacterial lipopolysaccharide (LPS) and mediates LPS-induced inflammatory response, including TNF secretion by monocytes. Antagonizes STUB1-mediated inhibition of TGF-beta signaling via inhibition of STUB1-mediated SMAD3 ubiquitination and degradation. Mediates the association of TOMM70 with IRF3 or TBK1 in mitochondrial outer membrane which promotes host antiviral response.</text>
</comment>
<comment type="catalytic activity">
    <reaction evidence="2">
        <text>ATP + H2O = ADP + phosphate + H(+)</text>
        <dbReference type="Rhea" id="RHEA:13065"/>
        <dbReference type="ChEBI" id="CHEBI:15377"/>
        <dbReference type="ChEBI" id="CHEBI:15378"/>
        <dbReference type="ChEBI" id="CHEBI:30616"/>
        <dbReference type="ChEBI" id="CHEBI:43474"/>
        <dbReference type="ChEBI" id="CHEBI:456216"/>
        <dbReference type="EC" id="3.6.4.10"/>
    </reaction>
</comment>
<comment type="activity regulation">
    <text evidence="2">In the resting state, through the dimerization of its C-terminal domain, HSP90 forms a homodimer which is defined as the open conformation. Upon ATP-binding, the N-terminal domain undergoes significant conformational changes and comes in contact to form an active closed conformation. After HSP90 finishes its chaperoning tasks of assisting the proper folding, stabilization and activation of client proteins under the active state, ATP molecule is hydrolyzed to ADP which then dissociates from HSP90 and directs the protein back to the resting state. Co-chaperone TSC1 promotes ATP binding and inhibits HSP90AA1 ATPase activity. Binding to phosphorylated AHSA1 promotes HSP90AA1 ATPase activity. Inhibited by geldanamycin, Ganetespib (STA-9090) and SNX-2112.</text>
</comment>
<comment type="subunit">
    <text evidence="2 3 4">Homodimer. Identified in NR3C1/GCR steroid receptor-chaperone complexes formed at least by NR3C1, HSP90AA1 and a variety of proteins containing TPR repeats such as FKBP4, FKBP5, PPID, PPP5C or STIP1. Forms a complex containing HSP90AA1, TSC1 and TSC2; TSC1 is required to recruit TCS2 to the complex. The closed form interacts (via the middle domain and TPR repeat-binding motif) with co-chaperone TSC1 (via C-terminus). Interacts with TOM34. Interacts with TERT; the interaction, together with PTGES3, is required for correct assembly and stabilization of the TERT holoenzyme complex. Interacts with CHORDC1 and DNAJC7. Interacts with STUB1 and UBE2N; may couple the chaperone and ubiquitination systems. Interacts (via TPR repeat-binding motif) with PPP5C (via TPR repeats); the interaction is direct and activates PPP5C phosphatase activity. Following LPS binding, may form a complex with CXCR4, GDF5 and HSPA8. Interacts with KSR1. Interacts with co-chaperone CDC37 (via C-terminus); the interaction inhibits HSP90AA1 ATPase activity. May interact with NWD1. Interacts with FNIP1 and FNIP2; the interaction inhibits HSP90AA1 ATPase activity. Interacts with co-chaperone AHSA1 (phosphorylated on 'Tyr-223'); the interaction activates HSP90AA1 ATPase activity and results in the dissociation of TSC1 from HSP90AA1. Interacts with FLCN in the presence of FNIP1. Interacts with HSP70, STIP1 and PTGES3. Interacts with SMYD3; this interaction enhances SMYD3 histone-lysine N-methyltransferase. Interacts with SGTA (via TPR repeats). Interacts with TTC1 (via TPR repeats). Interacts with HSF1 in an ATP-dependent manner. Interacts with MET; the interaction suppresses MET kinase activity. Interacts with ERBB2 in an ATP-dependent manner; the interaction suppresses ERBB2 kinase activity. Interacts with HIF1A, KEAP1 and RHOBTB2. Interacts with HSF1; this interaction is decreased in a IER5-dependent manner, promoting HSF1 accumulation in the nucleus, homotrimerization and DNA-binding activities. Interacts with STUB1 and SMAD3. Interacts with HSP90AB1; interaction is constitutive (By similarity). Interacts with HECTD1 (via N-terminus) (By similarity). Interacts with NR3C1 (via domain NR LBD) and NR1D1 (via domain NR LBD) (By similarity). Interacts with NLPR12 (By similarity). Interacts with PDCL3 (By similarity). Interacts with TOMM70; the interaction is required for preprotein mitochondrial import. Interacts with TOMM70, IRF3 and TBK1; the interactions are direct and mediate the association of TOMM70 with IRF3 and TBK1 (By similarity). Forms a complex with ASL, ASS1 and NOS2; the complex regulates cell-autonomous L-arginine synthesis and citrulline recycling while channeling extracellular L-arginine to nitric oxide synthesis pathway.</text>
</comment>
<comment type="subcellular location">
    <subcellularLocation>
        <location evidence="3">Nucleus</location>
    </subcellularLocation>
    <subcellularLocation>
        <location evidence="3">Cytoplasm</location>
    </subcellularLocation>
    <subcellularLocation>
        <location evidence="2">Melanosome</location>
    </subcellularLocation>
    <subcellularLocation>
        <location evidence="2">Cell membrane</location>
    </subcellularLocation>
    <subcellularLocation>
        <location evidence="2">Mitochondrion</location>
    </subcellularLocation>
</comment>
<comment type="domain">
    <text evidence="2">The TPR repeat-binding motif mediates interaction with TPR repeat-containing proteins like the co-chaperone STUB1.</text>
</comment>
<comment type="PTM">
    <text evidence="2">ISGylated.</text>
</comment>
<comment type="PTM">
    <text evidence="2">S-nitrosylated; negatively regulates the ATPase activity and the activation of eNOS by HSP90AA1.</text>
</comment>
<comment type="PTM">
    <text evidence="3">Ubiquitinated via 'Lys-63'-linked polyubiquitination by HECTD1. Ubiquitination promotes translocation into the cytoplasm away from the membrane and secretory pathways.</text>
</comment>
<comment type="similarity">
    <text evidence="6">Belongs to the heat shock protein 90 family.</text>
</comment>